<gene>
    <name type="primary">nqrF</name>
    <name type="synonym">nqr6</name>
</gene>
<reference key="1">
    <citation type="journal article" date="2000" name="Can. J. Microbiol.">
        <title>Detection of the Na(+)-translocating NADH-quinone reductase in marine bacteria using a PCR technique.</title>
        <authorList>
            <person name="Kato S."/>
            <person name="Yumoto I."/>
        </authorList>
    </citation>
    <scope>NUCLEOTIDE SEQUENCE [GENOMIC DNA]</scope>
    <source>
        <strain>IAM 1509</strain>
    </source>
</reference>
<sequence>GGSCGQCRVKIKSGGGDILPTEMGHITKKEAKEGCRLACQVAVKTDMELELDEEIFGVKKWQCEVISNDNKATFIKELLLKLPEGEDVHFKAGGYIQIEAPAHVVKYADFDIPEKYRGDWDKYGLFDIVSTVNEDVLRAYSMANYPDEKGRIMLNVRIATPPSANVPAGKMSSYIFNLKAGDKVTISGPFGEFFVKETDAEMVFIGGGAGMAPMRSHIFDQLKSKKTKRKMSFWYGARSTREVFYQADFDALAAENDNFVWHVALSEPLPEDNWTGYTGFIHNVIYENYLKNHKAPEDCEY</sequence>
<protein>
    <recommendedName>
        <fullName>Na(+)-translocating NADH-quinone reductase subunit F</fullName>
        <shortName>Na(+)-NQR subunit F</shortName>
        <shortName>Na(+)-translocating NQR subunit F</shortName>
        <ecNumber evidence="2">7.2.1.1</ecNumber>
    </recommendedName>
    <alternativeName>
        <fullName>NQR complex subunit F</fullName>
    </alternativeName>
    <alternativeName>
        <fullName>NQR-1 subunit F</fullName>
    </alternativeName>
</protein>
<evidence type="ECO:0000250" key="1">
    <source>
        <dbReference type="UniProtKB" id="A5F5Y4"/>
    </source>
</evidence>
<evidence type="ECO:0000250" key="2">
    <source>
        <dbReference type="UniProtKB" id="Q56584"/>
    </source>
</evidence>
<evidence type="ECO:0000255" key="3">
    <source>
        <dbReference type="PROSITE-ProRule" id="PRU00465"/>
    </source>
</evidence>
<evidence type="ECO:0000255" key="4">
    <source>
        <dbReference type="PROSITE-ProRule" id="PRU00716"/>
    </source>
</evidence>
<evidence type="ECO:0000305" key="5"/>
<feature type="chain" id="PRO_0000074503" description="Na(+)-translocating NADH-quinone reductase subunit F">
    <location>
        <begin position="1" status="less than"/>
        <end position="301" status="greater than"/>
    </location>
</feature>
<feature type="domain" description="2Fe-2S ferredoxin-type" evidence="3">
    <location>
        <begin position="1" status="less than"/>
        <end position="45"/>
    </location>
</feature>
<feature type="domain" description="FAD-binding FR-type" evidence="4">
    <location>
        <begin position="58"/>
        <end position="196"/>
    </location>
</feature>
<feature type="region of interest" description="Catalytic">
    <location>
        <begin position="199"/>
        <end position="301" status="greater than"/>
    </location>
</feature>
<feature type="binding site" evidence="3">
    <location>
        <position position="4"/>
    </location>
    <ligand>
        <name>[2Fe-2S] cluster</name>
        <dbReference type="ChEBI" id="CHEBI:190135"/>
    </ligand>
</feature>
<feature type="binding site" evidence="3">
    <location>
        <position position="7"/>
    </location>
    <ligand>
        <name>[2Fe-2S] cluster</name>
        <dbReference type="ChEBI" id="CHEBI:190135"/>
    </ligand>
</feature>
<feature type="binding site" evidence="3">
    <location>
        <position position="39"/>
    </location>
    <ligand>
        <name>[2Fe-2S] cluster</name>
        <dbReference type="ChEBI" id="CHEBI:190135"/>
    </ligand>
</feature>
<feature type="non-terminal residue">
    <location>
        <position position="1"/>
    </location>
</feature>
<feature type="non-terminal residue">
    <location>
        <position position="301"/>
    </location>
</feature>
<proteinExistence type="inferred from homology"/>
<accession>Q9LCI7</accession>
<dbReference type="EC" id="7.2.1.1" evidence="2"/>
<dbReference type="EMBL" id="AB024728">
    <property type="protein sequence ID" value="BAA83765.1"/>
    <property type="molecule type" value="Genomic_DNA"/>
</dbReference>
<dbReference type="SMR" id="Q9LCI7"/>
<dbReference type="GO" id="GO:0005886">
    <property type="term" value="C:plasma membrane"/>
    <property type="evidence" value="ECO:0007669"/>
    <property type="project" value="UniProtKB-SubCell"/>
</dbReference>
<dbReference type="GO" id="GO:0051537">
    <property type="term" value="F:2 iron, 2 sulfur cluster binding"/>
    <property type="evidence" value="ECO:0007669"/>
    <property type="project" value="UniProtKB-KW"/>
</dbReference>
<dbReference type="GO" id="GO:0046872">
    <property type="term" value="F:metal ion binding"/>
    <property type="evidence" value="ECO:0007669"/>
    <property type="project" value="UniProtKB-KW"/>
</dbReference>
<dbReference type="GO" id="GO:0016655">
    <property type="term" value="F:oxidoreductase activity, acting on NAD(P)H, quinone or similar compound as acceptor"/>
    <property type="evidence" value="ECO:0007669"/>
    <property type="project" value="InterPro"/>
</dbReference>
<dbReference type="GO" id="GO:0006814">
    <property type="term" value="P:sodium ion transport"/>
    <property type="evidence" value="ECO:0007669"/>
    <property type="project" value="UniProtKB-KW"/>
</dbReference>
<dbReference type="CDD" id="cd00207">
    <property type="entry name" value="fer2"/>
    <property type="match status" value="1"/>
</dbReference>
<dbReference type="CDD" id="cd06188">
    <property type="entry name" value="NADH_quinone_reductase"/>
    <property type="match status" value="1"/>
</dbReference>
<dbReference type="FunFam" id="3.40.50.80:FF:000014">
    <property type="entry name" value="Na(+)-translocating NADH-quinone reductase subunit F"/>
    <property type="match status" value="1"/>
</dbReference>
<dbReference type="Gene3D" id="3.10.20.30">
    <property type="match status" value="1"/>
</dbReference>
<dbReference type="Gene3D" id="3.40.50.80">
    <property type="entry name" value="Nucleotide-binding domain of ferredoxin-NADP reductase (FNR) module"/>
    <property type="match status" value="1"/>
</dbReference>
<dbReference type="Gene3D" id="2.40.30.10">
    <property type="entry name" value="Translation factors"/>
    <property type="match status" value="1"/>
</dbReference>
<dbReference type="InterPro" id="IPR036010">
    <property type="entry name" value="2Fe-2S_ferredoxin-like_sf"/>
</dbReference>
<dbReference type="InterPro" id="IPR001041">
    <property type="entry name" value="2Fe-2S_ferredoxin-type"/>
</dbReference>
<dbReference type="InterPro" id="IPR012675">
    <property type="entry name" value="Beta-grasp_dom_sf"/>
</dbReference>
<dbReference type="InterPro" id="IPR008333">
    <property type="entry name" value="Cbr1-like_FAD-bd_dom"/>
</dbReference>
<dbReference type="InterPro" id="IPR017927">
    <property type="entry name" value="FAD-bd_FR_type"/>
</dbReference>
<dbReference type="InterPro" id="IPR039261">
    <property type="entry name" value="FNR_nucleotide-bd"/>
</dbReference>
<dbReference type="InterPro" id="IPR010205">
    <property type="entry name" value="NqrF"/>
</dbReference>
<dbReference type="InterPro" id="IPR001433">
    <property type="entry name" value="OxRdtase_FAD/NAD-bd"/>
</dbReference>
<dbReference type="InterPro" id="IPR017938">
    <property type="entry name" value="Riboflavin_synthase-like_b-brl"/>
</dbReference>
<dbReference type="NCBIfam" id="TIGR01941">
    <property type="entry name" value="nqrF"/>
    <property type="match status" value="1"/>
</dbReference>
<dbReference type="PANTHER" id="PTHR43644">
    <property type="entry name" value="NA(+)-TRANSLOCATING NADH-QUINONE REDUCTASE SUBUNIT"/>
    <property type="match status" value="1"/>
</dbReference>
<dbReference type="PANTHER" id="PTHR43644:SF1">
    <property type="entry name" value="NAD(P)H-FLAVIN REDUCTASE"/>
    <property type="match status" value="1"/>
</dbReference>
<dbReference type="Pfam" id="PF00970">
    <property type="entry name" value="FAD_binding_6"/>
    <property type="match status" value="1"/>
</dbReference>
<dbReference type="Pfam" id="PF00175">
    <property type="entry name" value="NAD_binding_1"/>
    <property type="match status" value="1"/>
</dbReference>
<dbReference type="SUPFAM" id="SSF54292">
    <property type="entry name" value="2Fe-2S ferredoxin-like"/>
    <property type="match status" value="1"/>
</dbReference>
<dbReference type="SUPFAM" id="SSF52343">
    <property type="entry name" value="Ferredoxin reductase-like, C-terminal NADP-linked domain"/>
    <property type="match status" value="1"/>
</dbReference>
<dbReference type="SUPFAM" id="SSF63380">
    <property type="entry name" value="Riboflavin synthase domain-like"/>
    <property type="match status" value="1"/>
</dbReference>
<dbReference type="PROSITE" id="PS51384">
    <property type="entry name" value="FAD_FR"/>
    <property type="match status" value="1"/>
</dbReference>
<comment type="function">
    <text evidence="2">NQR complex catalyzes the reduction of ubiquinone-1 to ubiquinol by two successive reactions, coupled with the transport of Na(+) ions from the cytoplasm to the periplasm. The first step is catalyzed by NqrF, which accepts electrons from NADH and reduces ubiquinone-1 to ubisemiquinone by a one-electron transfer pathway.</text>
</comment>
<comment type="catalytic activity">
    <reaction evidence="2">
        <text>a ubiquinone + n Na(+)(in) + NADH + H(+) = a ubiquinol + n Na(+)(out) + NAD(+)</text>
        <dbReference type="Rhea" id="RHEA:47748"/>
        <dbReference type="Rhea" id="RHEA-COMP:9565"/>
        <dbReference type="Rhea" id="RHEA-COMP:9566"/>
        <dbReference type="ChEBI" id="CHEBI:15378"/>
        <dbReference type="ChEBI" id="CHEBI:16389"/>
        <dbReference type="ChEBI" id="CHEBI:17976"/>
        <dbReference type="ChEBI" id="CHEBI:29101"/>
        <dbReference type="ChEBI" id="CHEBI:57540"/>
        <dbReference type="ChEBI" id="CHEBI:57945"/>
        <dbReference type="EC" id="7.2.1.1"/>
    </reaction>
</comment>
<comment type="cofactor">
    <cofactor evidence="1">
        <name>[2Fe-2S] cluster</name>
        <dbReference type="ChEBI" id="CHEBI:190135"/>
    </cofactor>
    <text evidence="1">Binds 1 [2Fe-2S] cluster.</text>
</comment>
<comment type="cofactor">
    <cofactor evidence="1">
        <name>FAD</name>
        <dbReference type="ChEBI" id="CHEBI:57692"/>
    </cofactor>
</comment>
<comment type="subunit">
    <text evidence="2">Composed of six subunits; NqrA, NqrB, NqrC, NqrD, NqrE and NqrF.</text>
</comment>
<comment type="subcellular location">
    <subcellularLocation>
        <location evidence="5">Cell inner membrane</location>
    </subcellularLocation>
</comment>
<comment type="similarity">
    <text evidence="5">Belongs to the NqrF family.</text>
</comment>
<name>NQRF_SHEPU</name>
<keyword id="KW-0001">2Fe-2S</keyword>
<keyword id="KW-0997">Cell inner membrane</keyword>
<keyword id="KW-1003">Cell membrane</keyword>
<keyword id="KW-0274">FAD</keyword>
<keyword id="KW-0285">Flavoprotein</keyword>
<keyword id="KW-0406">Ion transport</keyword>
<keyword id="KW-0408">Iron</keyword>
<keyword id="KW-0411">Iron-sulfur</keyword>
<keyword id="KW-0472">Membrane</keyword>
<keyword id="KW-0479">Metal-binding</keyword>
<keyword id="KW-0520">NAD</keyword>
<keyword id="KW-0915">Sodium</keyword>
<keyword id="KW-0739">Sodium transport</keyword>
<keyword id="KW-1278">Translocase</keyword>
<keyword id="KW-0813">Transport</keyword>
<keyword id="KW-0830">Ubiquinone</keyword>
<organism>
    <name type="scientific">Shewanella putrefaciens</name>
    <name type="common">Pseudomonas putrefaciens</name>
    <dbReference type="NCBI Taxonomy" id="24"/>
    <lineage>
        <taxon>Bacteria</taxon>
        <taxon>Pseudomonadati</taxon>
        <taxon>Pseudomonadota</taxon>
        <taxon>Gammaproteobacteria</taxon>
        <taxon>Alteromonadales</taxon>
        <taxon>Shewanellaceae</taxon>
        <taxon>Shewanella</taxon>
    </lineage>
</organism>